<name>YIL5_SCHPO</name>
<protein>
    <recommendedName>
        <fullName>Uncharacterized protein C1565.05</fullName>
    </recommendedName>
</protein>
<comment type="subcellular location">
    <subcellularLocation>
        <location evidence="2">Cytoplasm</location>
    </subcellularLocation>
</comment>
<accession>Q9P3A9</accession>
<reference key="1">
    <citation type="journal article" date="2002" name="Nature">
        <title>The genome sequence of Schizosaccharomyces pombe.</title>
        <authorList>
            <person name="Wood V."/>
            <person name="Gwilliam R."/>
            <person name="Rajandream M.A."/>
            <person name="Lyne M.H."/>
            <person name="Lyne R."/>
            <person name="Stewart A."/>
            <person name="Sgouros J.G."/>
            <person name="Peat N."/>
            <person name="Hayles J."/>
            <person name="Baker S.G."/>
            <person name="Basham D."/>
            <person name="Bowman S."/>
            <person name="Brooks K."/>
            <person name="Brown D."/>
            <person name="Brown S."/>
            <person name="Chillingworth T."/>
            <person name="Churcher C.M."/>
            <person name="Collins M."/>
            <person name="Connor R."/>
            <person name="Cronin A."/>
            <person name="Davis P."/>
            <person name="Feltwell T."/>
            <person name="Fraser A."/>
            <person name="Gentles S."/>
            <person name="Goble A."/>
            <person name="Hamlin N."/>
            <person name="Harris D.E."/>
            <person name="Hidalgo J."/>
            <person name="Hodgson G."/>
            <person name="Holroyd S."/>
            <person name="Hornsby T."/>
            <person name="Howarth S."/>
            <person name="Huckle E.J."/>
            <person name="Hunt S."/>
            <person name="Jagels K."/>
            <person name="James K.D."/>
            <person name="Jones L."/>
            <person name="Jones M."/>
            <person name="Leather S."/>
            <person name="McDonald S."/>
            <person name="McLean J."/>
            <person name="Mooney P."/>
            <person name="Moule S."/>
            <person name="Mungall K.L."/>
            <person name="Murphy L.D."/>
            <person name="Niblett D."/>
            <person name="Odell C."/>
            <person name="Oliver K."/>
            <person name="O'Neil S."/>
            <person name="Pearson D."/>
            <person name="Quail M.A."/>
            <person name="Rabbinowitsch E."/>
            <person name="Rutherford K.M."/>
            <person name="Rutter S."/>
            <person name="Saunders D."/>
            <person name="Seeger K."/>
            <person name="Sharp S."/>
            <person name="Skelton J."/>
            <person name="Simmonds M.N."/>
            <person name="Squares R."/>
            <person name="Squares S."/>
            <person name="Stevens K."/>
            <person name="Taylor K."/>
            <person name="Taylor R.G."/>
            <person name="Tivey A."/>
            <person name="Walsh S.V."/>
            <person name="Warren T."/>
            <person name="Whitehead S."/>
            <person name="Woodward J.R."/>
            <person name="Volckaert G."/>
            <person name="Aert R."/>
            <person name="Robben J."/>
            <person name="Grymonprez B."/>
            <person name="Weltjens I."/>
            <person name="Vanstreels E."/>
            <person name="Rieger M."/>
            <person name="Schaefer M."/>
            <person name="Mueller-Auer S."/>
            <person name="Gabel C."/>
            <person name="Fuchs M."/>
            <person name="Duesterhoeft A."/>
            <person name="Fritzc C."/>
            <person name="Holzer E."/>
            <person name="Moestl D."/>
            <person name="Hilbert H."/>
            <person name="Borzym K."/>
            <person name="Langer I."/>
            <person name="Beck A."/>
            <person name="Lehrach H."/>
            <person name="Reinhardt R."/>
            <person name="Pohl T.M."/>
            <person name="Eger P."/>
            <person name="Zimmermann W."/>
            <person name="Wedler H."/>
            <person name="Wambutt R."/>
            <person name="Purnelle B."/>
            <person name="Goffeau A."/>
            <person name="Cadieu E."/>
            <person name="Dreano S."/>
            <person name="Gloux S."/>
            <person name="Lelaure V."/>
            <person name="Mottier S."/>
            <person name="Galibert F."/>
            <person name="Aves S.J."/>
            <person name="Xiang Z."/>
            <person name="Hunt C."/>
            <person name="Moore K."/>
            <person name="Hurst S.M."/>
            <person name="Lucas M."/>
            <person name="Rochet M."/>
            <person name="Gaillardin C."/>
            <person name="Tallada V.A."/>
            <person name="Garzon A."/>
            <person name="Thode G."/>
            <person name="Daga R.R."/>
            <person name="Cruzado L."/>
            <person name="Jimenez J."/>
            <person name="Sanchez M."/>
            <person name="del Rey F."/>
            <person name="Benito J."/>
            <person name="Dominguez A."/>
            <person name="Revuelta J.L."/>
            <person name="Moreno S."/>
            <person name="Armstrong J."/>
            <person name="Forsburg S.L."/>
            <person name="Cerutti L."/>
            <person name="Lowe T."/>
            <person name="McCombie W.R."/>
            <person name="Paulsen I."/>
            <person name="Potashkin J."/>
            <person name="Shpakovski G.V."/>
            <person name="Ussery D."/>
            <person name="Barrell B.G."/>
            <person name="Nurse P."/>
        </authorList>
    </citation>
    <scope>NUCLEOTIDE SEQUENCE [LARGE SCALE GENOMIC DNA]</scope>
    <source>
        <strain>972 / ATCC 24843</strain>
    </source>
</reference>
<reference key="2">
    <citation type="journal article" date="2006" name="Nat. Biotechnol.">
        <title>ORFeome cloning and global analysis of protein localization in the fission yeast Schizosaccharomyces pombe.</title>
        <authorList>
            <person name="Matsuyama A."/>
            <person name="Arai R."/>
            <person name="Yashiroda Y."/>
            <person name="Shirai A."/>
            <person name="Kamata A."/>
            <person name="Sekido S."/>
            <person name="Kobayashi Y."/>
            <person name="Hashimoto A."/>
            <person name="Hamamoto M."/>
            <person name="Hiraoka Y."/>
            <person name="Horinouchi S."/>
            <person name="Yoshida M."/>
        </authorList>
    </citation>
    <scope>SUBCELLULAR LOCATION [LARGE SCALE ANALYSIS]</scope>
</reference>
<proteinExistence type="predicted"/>
<evidence type="ECO:0000256" key="1">
    <source>
        <dbReference type="SAM" id="MobiDB-lite"/>
    </source>
</evidence>
<evidence type="ECO:0000269" key="2">
    <source>
    </source>
</evidence>
<sequence>MASFGELSFLSEISNIHKSNKKHEIQSAGTVALDNGVESPYYICVQVENQGIEVYHMKDERLFASCPLPEKTRFSCSPIYIKEGNWHYIWTCTSLKSNGEWKILLWKFNDLEEESEVVYRDISNQQIFALHFISSTGQLVIVFRNGKIAFLDPEDDKVHMSASVNESATLLQSMYVPSQANPIDAVRLASNEASGTNNNPKEIEMNSDTTSSVPKSGSTSFSANVTSSTSMVYLLYSVHVDKIIQYYVDSFSVSERRLVNTRAVVLKEVQAPSHILMSKDSTSIYTISLEGLSIYSLHDESKSYMLIKILHFQSISKIEHIELISDNFLLIQHDSQLSLWDITFGTIQDVYDLKQKPTILTFTCYKSSLKKMNQNSQLTGYIAVLLKKGLAIVPYTLPIKMLLADAVGKRTSKIGKLRGTNELIGEGVLTKSKNGPSMRDQLLKNIQLQDHSLRDELISLRSLAEQKNTIEFDAKFLGVVERYQNQYANNCKILKTSSVLPIPFAHAIESLLFSLDEENELQVSCAASGTLNYLIRHRLFSYSTLVQKGFSGSVFDCLYKFQKDIAFNFLERTSDISAYEIACAIKTAINSSKVKLLRSALARLSLFDSTTSREALLLAFVPEDFDSLFKTLGNLVVDSNLASVKFNLETYIYCLSVVLDAMGVGGVASSSENLEAARILYNDLQEKLTNLTAMSLVLPAISEIVKRKKDVHAERVQFYANPQPKAIVDDMGDLATLLKKDFLSEKRKGKSQRARGKEIDMAIGKYTVERLEI</sequence>
<keyword id="KW-0963">Cytoplasm</keyword>
<keyword id="KW-1185">Reference proteome</keyword>
<organism>
    <name type="scientific">Schizosaccharomyces pombe (strain 972 / ATCC 24843)</name>
    <name type="common">Fission yeast</name>
    <dbReference type="NCBI Taxonomy" id="284812"/>
    <lineage>
        <taxon>Eukaryota</taxon>
        <taxon>Fungi</taxon>
        <taxon>Dikarya</taxon>
        <taxon>Ascomycota</taxon>
        <taxon>Taphrinomycotina</taxon>
        <taxon>Schizosaccharomycetes</taxon>
        <taxon>Schizosaccharomycetales</taxon>
        <taxon>Schizosaccharomycetaceae</taxon>
        <taxon>Schizosaccharomyces</taxon>
    </lineage>
</organism>
<gene>
    <name type="ORF">SPAC1565.05</name>
</gene>
<feature type="chain" id="PRO_0000304047" description="Uncharacterized protein C1565.05">
    <location>
        <begin position="1"/>
        <end position="773"/>
    </location>
</feature>
<feature type="region of interest" description="Disordered" evidence="1">
    <location>
        <begin position="192"/>
        <end position="219"/>
    </location>
</feature>
<dbReference type="EMBL" id="CU329670">
    <property type="protein sequence ID" value="CAB99272.1"/>
    <property type="molecule type" value="Genomic_DNA"/>
</dbReference>
<dbReference type="BioGRID" id="277945">
    <property type="interactions" value="6"/>
</dbReference>
<dbReference type="STRING" id="284812.Q9P3A9"/>
<dbReference type="iPTMnet" id="Q9P3A9"/>
<dbReference type="PaxDb" id="4896-SPAC1565.05.1"/>
<dbReference type="EnsemblFungi" id="SPAC1565.05.1">
    <property type="protein sequence ID" value="SPAC1565.05.1:pep"/>
    <property type="gene ID" value="SPAC1565.05"/>
</dbReference>
<dbReference type="KEGG" id="spo:2541440"/>
<dbReference type="PomBase" id="SPAC1565.05"/>
<dbReference type="VEuPathDB" id="FungiDB:SPAC1565.05"/>
<dbReference type="eggNOG" id="ENOG502R7E4">
    <property type="taxonomic scope" value="Eukaryota"/>
</dbReference>
<dbReference type="HOGENOM" id="CLU_365308_0_0_1"/>
<dbReference type="InParanoid" id="Q9P3A9"/>
<dbReference type="OMA" id="NSHYIWA"/>
<dbReference type="PRO" id="PR:Q9P3A9"/>
<dbReference type="Proteomes" id="UP000002485">
    <property type="component" value="Chromosome I"/>
</dbReference>
<dbReference type="GO" id="GO:0005737">
    <property type="term" value="C:cytoplasm"/>
    <property type="evidence" value="ECO:0007669"/>
    <property type="project" value="UniProtKB-SubCell"/>
</dbReference>
<dbReference type="GO" id="GO:0032040">
    <property type="term" value="C:small-subunit processome"/>
    <property type="evidence" value="ECO:0000314"/>
    <property type="project" value="PomBase"/>
</dbReference>
<dbReference type="GO" id="GO:0034455">
    <property type="term" value="C:t-UTP complex"/>
    <property type="evidence" value="ECO:0000266"/>
    <property type="project" value="PomBase"/>
</dbReference>
<dbReference type="GO" id="GO:0030515">
    <property type="term" value="F:snoRNA binding"/>
    <property type="evidence" value="ECO:0000266"/>
    <property type="project" value="PomBase"/>
</dbReference>
<dbReference type="GO" id="GO:0000462">
    <property type="term" value="P:maturation of SSU-rRNA from tricistronic rRNA transcript (SSU-rRNA, 5.8S rRNA, LSU-rRNA)"/>
    <property type="evidence" value="ECO:0000266"/>
    <property type="project" value="PomBase"/>
</dbReference>
<dbReference type="InterPro" id="IPR018843">
    <property type="entry name" value="Utp8_b-prop"/>
</dbReference>
<dbReference type="InterPro" id="IPR053881">
    <property type="entry name" value="Utp8_C"/>
</dbReference>
<dbReference type="InterPro" id="IPR036322">
    <property type="entry name" value="WD40_repeat_dom_sf"/>
</dbReference>
<dbReference type="Pfam" id="PF10395">
    <property type="entry name" value="Utp8_b_propeller"/>
    <property type="match status" value="1"/>
</dbReference>
<dbReference type="Pfam" id="PF22542">
    <property type="entry name" value="Utp8_C"/>
    <property type="match status" value="1"/>
</dbReference>
<dbReference type="SUPFAM" id="SSF50978">
    <property type="entry name" value="WD40 repeat-like"/>
    <property type="match status" value="1"/>
</dbReference>